<sequence length="284" mass="30868">MYVVSTKQMLNNAQRGGYAVPAFNIHNLETMQVVVETAANLHAPVIIAGTPGTFTHAGTENLLALVSAMAKQYHHPLAIHLDHHTKFDDIAQKVRSGVRSVMIDASHLPFAQNISRVKEVVDFCHRFDVSVEAELGQLGGQEDDVQVNEADALYTNPVQAREFAEATGIDSLAVAIGTAHGMYASAPVLDFSRLENIRQWVNLPLVLHGASGLSTKDIQQTIKLGICKINVATELKNAFSQALKNYLTEHPEATDPRDYLQSAKSAMRDVVSKVIADCGCEGRA</sequence>
<gene>
    <name evidence="1" type="primary">gatY</name>
    <name type="ordered locus">ECUMN_2428</name>
</gene>
<protein>
    <recommendedName>
        <fullName evidence="1">D-tagatose-1,6-bisphosphate aldolase subunit GatY</fullName>
        <shortName evidence="1">TBPA</shortName>
        <shortName evidence="1">TagBP aldolase</shortName>
        <ecNumber evidence="1">4.1.2.40</ecNumber>
    </recommendedName>
    <alternativeName>
        <fullName evidence="1">D-tagatose-bisphosphate aldolase class II</fullName>
    </alternativeName>
    <alternativeName>
        <fullName evidence="1">Tagatose-bisphosphate aldolase</fullName>
    </alternativeName>
</protein>
<evidence type="ECO:0000255" key="1">
    <source>
        <dbReference type="HAMAP-Rule" id="MF_01294"/>
    </source>
</evidence>
<keyword id="KW-0298">Galactitol metabolism</keyword>
<keyword id="KW-0456">Lyase</keyword>
<keyword id="KW-0479">Metal-binding</keyword>
<keyword id="KW-0862">Zinc</keyword>
<feature type="chain" id="PRO_1000140439" description="D-tagatose-1,6-bisphosphate aldolase subunit GatY">
    <location>
        <begin position="1"/>
        <end position="284"/>
    </location>
</feature>
<feature type="active site" description="Proton donor" evidence="1">
    <location>
        <position position="82"/>
    </location>
</feature>
<feature type="binding site" evidence="1">
    <location>
        <position position="83"/>
    </location>
    <ligand>
        <name>Zn(2+)</name>
        <dbReference type="ChEBI" id="CHEBI:29105"/>
        <note>catalytic</note>
    </ligand>
</feature>
<feature type="binding site" evidence="1">
    <location>
        <position position="180"/>
    </location>
    <ligand>
        <name>Zn(2+)</name>
        <dbReference type="ChEBI" id="CHEBI:29105"/>
        <note>catalytic</note>
    </ligand>
</feature>
<feature type="binding site" evidence="1">
    <location>
        <position position="181"/>
    </location>
    <ligand>
        <name>dihydroxyacetone phosphate</name>
        <dbReference type="ChEBI" id="CHEBI:57642"/>
    </ligand>
</feature>
<feature type="binding site" evidence="1">
    <location>
        <position position="208"/>
    </location>
    <ligand>
        <name>Zn(2+)</name>
        <dbReference type="ChEBI" id="CHEBI:29105"/>
        <note>catalytic</note>
    </ligand>
</feature>
<feature type="binding site" evidence="1">
    <location>
        <begin position="209"/>
        <end position="211"/>
    </location>
    <ligand>
        <name>dihydroxyacetone phosphate</name>
        <dbReference type="ChEBI" id="CHEBI:57642"/>
    </ligand>
</feature>
<feature type="binding site" evidence="1">
    <location>
        <begin position="230"/>
        <end position="233"/>
    </location>
    <ligand>
        <name>dihydroxyacetone phosphate</name>
        <dbReference type="ChEBI" id="CHEBI:57642"/>
    </ligand>
</feature>
<accession>B7NCC6</accession>
<comment type="function">
    <text evidence="1">Catalytic subunit of the tagatose-1,6-bisphosphate aldolase GatYZ, which catalyzes the reversible aldol condensation of dihydroxyacetone phosphate (DHAP or glycerone-phosphate) with glyceraldehyde 3-phosphate (G3P) to produce tagatose 1,6-bisphosphate (TBP). Requires GatZ subunit for full activity and stability. Is involved in the catabolism of galactitol.</text>
</comment>
<comment type="catalytic activity">
    <reaction evidence="1">
        <text>D-tagatofuranose 1,6-bisphosphate = D-glyceraldehyde 3-phosphate + dihydroxyacetone phosphate</text>
        <dbReference type="Rhea" id="RHEA:22948"/>
        <dbReference type="ChEBI" id="CHEBI:57642"/>
        <dbReference type="ChEBI" id="CHEBI:58694"/>
        <dbReference type="ChEBI" id="CHEBI:59776"/>
        <dbReference type="EC" id="4.1.2.40"/>
    </reaction>
</comment>
<comment type="cofactor">
    <cofactor evidence="1">
        <name>Zn(2+)</name>
        <dbReference type="ChEBI" id="CHEBI:29105"/>
    </cofactor>
    <text evidence="1">Binds 1 zinc ion per subunit.</text>
</comment>
<comment type="pathway">
    <text evidence="1">Carbohydrate metabolism; D-tagatose 6-phosphate degradation; D-glyceraldehyde 3-phosphate and glycerone phosphate from D-tagatose 6-phosphate: step 2/2.</text>
</comment>
<comment type="subunit">
    <text evidence="1">Forms a complex with GatZ.</text>
</comment>
<comment type="similarity">
    <text evidence="1">Belongs to the class II fructose-bisphosphate aldolase family. TagBP aldolase GatY subfamily.</text>
</comment>
<name>GATY_ECOLU</name>
<dbReference type="EC" id="4.1.2.40" evidence="1"/>
<dbReference type="EMBL" id="CU928163">
    <property type="protein sequence ID" value="CAR13616.1"/>
    <property type="molecule type" value="Genomic_DNA"/>
</dbReference>
<dbReference type="RefSeq" id="WP_001306380.1">
    <property type="nucleotide sequence ID" value="NC_011751.1"/>
</dbReference>
<dbReference type="RefSeq" id="YP_002413144.1">
    <property type="nucleotide sequence ID" value="NC_011751.1"/>
</dbReference>
<dbReference type="SMR" id="B7NCC6"/>
<dbReference type="STRING" id="585056.ECUMN_2428"/>
<dbReference type="KEGG" id="eum:ECUMN_2428"/>
<dbReference type="PATRIC" id="fig|585056.7.peg.2609"/>
<dbReference type="HOGENOM" id="CLU_040088_0_1_6"/>
<dbReference type="UniPathway" id="UPA00704">
    <property type="reaction ID" value="UER00716"/>
</dbReference>
<dbReference type="Proteomes" id="UP000007097">
    <property type="component" value="Chromosome"/>
</dbReference>
<dbReference type="GO" id="GO:0005829">
    <property type="term" value="C:cytosol"/>
    <property type="evidence" value="ECO:0007669"/>
    <property type="project" value="TreeGrafter"/>
</dbReference>
<dbReference type="GO" id="GO:0009025">
    <property type="term" value="F:tagatose-bisphosphate aldolase activity"/>
    <property type="evidence" value="ECO:0007669"/>
    <property type="project" value="UniProtKB-UniRule"/>
</dbReference>
<dbReference type="GO" id="GO:0008270">
    <property type="term" value="F:zinc ion binding"/>
    <property type="evidence" value="ECO:0007669"/>
    <property type="project" value="UniProtKB-UniRule"/>
</dbReference>
<dbReference type="GO" id="GO:2001059">
    <property type="term" value="P:D-tagatose 6-phosphate catabolic process"/>
    <property type="evidence" value="ECO:0007669"/>
    <property type="project" value="UniProtKB-UniRule"/>
</dbReference>
<dbReference type="GO" id="GO:0019404">
    <property type="term" value="P:galactitol catabolic process"/>
    <property type="evidence" value="ECO:0007669"/>
    <property type="project" value="InterPro"/>
</dbReference>
<dbReference type="CDD" id="cd00947">
    <property type="entry name" value="TBP_aldolase_IIB"/>
    <property type="match status" value="1"/>
</dbReference>
<dbReference type="FunFam" id="3.20.20.70:FF:000043">
    <property type="entry name" value="D-tagatose-1,6-bisphosphate aldolase subunit GatY"/>
    <property type="match status" value="1"/>
</dbReference>
<dbReference type="Gene3D" id="3.20.20.70">
    <property type="entry name" value="Aldolase class I"/>
    <property type="match status" value="1"/>
</dbReference>
<dbReference type="HAMAP" id="MF_01294">
    <property type="entry name" value="TagBP_aldolase_GatY"/>
    <property type="match status" value="1"/>
</dbReference>
<dbReference type="InterPro" id="IPR013785">
    <property type="entry name" value="Aldolase_TIM"/>
</dbReference>
<dbReference type="InterPro" id="IPR050246">
    <property type="entry name" value="Class_II_FBP_aldolase"/>
</dbReference>
<dbReference type="InterPro" id="IPR000771">
    <property type="entry name" value="FBA_II"/>
</dbReference>
<dbReference type="InterPro" id="IPR011288">
    <property type="entry name" value="TagBP_ald_KbaY/GatY"/>
</dbReference>
<dbReference type="InterPro" id="IPR023955">
    <property type="entry name" value="TagBP_aldolase_GatY"/>
</dbReference>
<dbReference type="NCBIfam" id="TIGR00167">
    <property type="entry name" value="cbbA"/>
    <property type="match status" value="1"/>
</dbReference>
<dbReference type="NCBIfam" id="NF006626">
    <property type="entry name" value="PRK09195.1"/>
    <property type="match status" value="1"/>
</dbReference>
<dbReference type="NCBIfam" id="NF009374">
    <property type="entry name" value="PRK12737.1"/>
    <property type="match status" value="1"/>
</dbReference>
<dbReference type="NCBIfam" id="TIGR01858">
    <property type="entry name" value="tag_bisphos_ald"/>
    <property type="match status" value="1"/>
</dbReference>
<dbReference type="PANTHER" id="PTHR30304">
    <property type="entry name" value="D-TAGATOSE-1,6-BISPHOSPHATE ALDOLASE"/>
    <property type="match status" value="1"/>
</dbReference>
<dbReference type="PANTHER" id="PTHR30304:SF0">
    <property type="entry name" value="D-TAGATOSE-1,6-BISPHOSPHATE ALDOLASE SUBUNIT GATY-RELATED"/>
    <property type="match status" value="1"/>
</dbReference>
<dbReference type="Pfam" id="PF01116">
    <property type="entry name" value="F_bP_aldolase"/>
    <property type="match status" value="1"/>
</dbReference>
<dbReference type="PIRSF" id="PIRSF001359">
    <property type="entry name" value="F_bP_aldolase_II"/>
    <property type="match status" value="1"/>
</dbReference>
<dbReference type="SUPFAM" id="SSF51569">
    <property type="entry name" value="Aldolase"/>
    <property type="match status" value="1"/>
</dbReference>
<dbReference type="PROSITE" id="PS00602">
    <property type="entry name" value="ALDOLASE_CLASS_II_1"/>
    <property type="match status" value="1"/>
</dbReference>
<dbReference type="PROSITE" id="PS00806">
    <property type="entry name" value="ALDOLASE_CLASS_II_2"/>
    <property type="match status" value="1"/>
</dbReference>
<organism>
    <name type="scientific">Escherichia coli O17:K52:H18 (strain UMN026 / ExPEC)</name>
    <dbReference type="NCBI Taxonomy" id="585056"/>
    <lineage>
        <taxon>Bacteria</taxon>
        <taxon>Pseudomonadati</taxon>
        <taxon>Pseudomonadota</taxon>
        <taxon>Gammaproteobacteria</taxon>
        <taxon>Enterobacterales</taxon>
        <taxon>Enterobacteriaceae</taxon>
        <taxon>Escherichia</taxon>
    </lineage>
</organism>
<reference key="1">
    <citation type="journal article" date="2009" name="PLoS Genet.">
        <title>Organised genome dynamics in the Escherichia coli species results in highly diverse adaptive paths.</title>
        <authorList>
            <person name="Touchon M."/>
            <person name="Hoede C."/>
            <person name="Tenaillon O."/>
            <person name="Barbe V."/>
            <person name="Baeriswyl S."/>
            <person name="Bidet P."/>
            <person name="Bingen E."/>
            <person name="Bonacorsi S."/>
            <person name="Bouchier C."/>
            <person name="Bouvet O."/>
            <person name="Calteau A."/>
            <person name="Chiapello H."/>
            <person name="Clermont O."/>
            <person name="Cruveiller S."/>
            <person name="Danchin A."/>
            <person name="Diard M."/>
            <person name="Dossat C."/>
            <person name="Karoui M.E."/>
            <person name="Frapy E."/>
            <person name="Garry L."/>
            <person name="Ghigo J.M."/>
            <person name="Gilles A.M."/>
            <person name="Johnson J."/>
            <person name="Le Bouguenec C."/>
            <person name="Lescat M."/>
            <person name="Mangenot S."/>
            <person name="Martinez-Jehanne V."/>
            <person name="Matic I."/>
            <person name="Nassif X."/>
            <person name="Oztas S."/>
            <person name="Petit M.A."/>
            <person name="Pichon C."/>
            <person name="Rouy Z."/>
            <person name="Ruf C.S."/>
            <person name="Schneider D."/>
            <person name="Tourret J."/>
            <person name="Vacherie B."/>
            <person name="Vallenet D."/>
            <person name="Medigue C."/>
            <person name="Rocha E.P.C."/>
            <person name="Denamur E."/>
        </authorList>
    </citation>
    <scope>NUCLEOTIDE SEQUENCE [LARGE SCALE GENOMIC DNA]</scope>
    <source>
        <strain>UMN026 / ExPEC</strain>
    </source>
</reference>
<proteinExistence type="inferred from homology"/>